<proteinExistence type="evidence at protein level"/>
<reference key="1">
    <citation type="journal article" date="1998" name="Cell">
        <title>Lipid A acylation and bacterial resistance against vertebrate antimicrobial peptides.</title>
        <authorList>
            <person name="Guo L."/>
            <person name="Lim K.B."/>
            <person name="Poduje C.M."/>
            <person name="Morad D."/>
            <person name="Gunn J.S."/>
            <person name="Hackett M."/>
            <person name="Miller S.I."/>
        </authorList>
    </citation>
    <scope>NUCLEOTIDE SEQUENCE [GENOMIC DNA]</scope>
    <scope>FUNCTION AS PALMITOYL TRANSFERASE AND IN CAMP RESISTANCE</scope>
    <scope>CATALYTIC ACTIVITY</scope>
    <scope>DISRUPTION PHENOTYPE</scope>
    <source>
        <strain>ATCC 14028 / SGSC 2980 / CDC 6516-60 / NCTC 12023</strain>
    </source>
</reference>
<reference key="2">
    <citation type="journal article" date="2001" name="Nature">
        <title>Complete genome sequence of Salmonella enterica serovar Typhimurium LT2.</title>
        <authorList>
            <person name="McClelland M."/>
            <person name="Sanderson K.E."/>
            <person name="Spieth J."/>
            <person name="Clifton S.W."/>
            <person name="Latreille P."/>
            <person name="Courtney L."/>
            <person name="Porwollik S."/>
            <person name="Ali J."/>
            <person name="Dante M."/>
            <person name="Du F."/>
            <person name="Hou S."/>
            <person name="Layman D."/>
            <person name="Leonard S."/>
            <person name="Nguyen C."/>
            <person name="Scott K."/>
            <person name="Holmes A."/>
            <person name="Grewal N."/>
            <person name="Mulvaney E."/>
            <person name="Ryan E."/>
            <person name="Sun H."/>
            <person name="Florea L."/>
            <person name="Miller W."/>
            <person name="Stoneking T."/>
            <person name="Nhan M."/>
            <person name="Waterston R."/>
            <person name="Wilson R.K."/>
        </authorList>
    </citation>
    <scope>NUCLEOTIDE SEQUENCE [LARGE SCALE GENOMIC DNA]</scope>
    <source>
        <strain>LT2 / SGSC1412 / ATCC 700720</strain>
    </source>
</reference>
<reference key="3">
    <citation type="journal article" date="2000" name="EMBO J.">
        <title>Transfer of palmitate from phospholipids to lipid A in outer membranes of gram-negative bacteria.</title>
        <authorList>
            <person name="Bishop R.E."/>
            <person name="Gibbons H.S."/>
            <person name="Guina T."/>
            <person name="Trent M.S."/>
            <person name="Miller S.I."/>
            <person name="Raetz C.R."/>
        </authorList>
    </citation>
    <scope>FUNCTION AS PALMITOYL TRANSFERASE</scope>
    <scope>CATALYTIC ACTIVITY</scope>
    <scope>SUBCELLULAR LOCATION</scope>
    <source>
        <strain>ATCC 14028 / SGSC 2980 / CDC 6516-60 / NCTC 12023</strain>
    </source>
</reference>
<dbReference type="EC" id="2.3.1.251" evidence="1 2 3"/>
<dbReference type="EMBL" id="AF057021">
    <property type="protein sequence ID" value="AAC67499.1"/>
    <property type="status" value="ALT_INIT"/>
    <property type="molecule type" value="Genomic_DNA"/>
</dbReference>
<dbReference type="EMBL" id="AE006468">
    <property type="protein sequence ID" value="AAL19579.1"/>
    <property type="molecule type" value="Genomic_DNA"/>
</dbReference>
<dbReference type="RefSeq" id="NP_459620.1">
    <property type="nucleotide sequence ID" value="NC_003197.2"/>
</dbReference>
<dbReference type="RefSeq" id="WP_000289054.1">
    <property type="nucleotide sequence ID" value="NC_003197.2"/>
</dbReference>
<dbReference type="SMR" id="Q8ZR06"/>
<dbReference type="STRING" id="99287.STM0628"/>
<dbReference type="PaxDb" id="99287-STM0628"/>
<dbReference type="GeneID" id="1252148"/>
<dbReference type="KEGG" id="stm:STM0628"/>
<dbReference type="PATRIC" id="fig|99287.12.peg.662"/>
<dbReference type="HOGENOM" id="CLU_104099_0_0_6"/>
<dbReference type="OMA" id="FFAWLRW"/>
<dbReference type="BioCyc" id="MetaCyc:STM0628-MONOMER"/>
<dbReference type="BioCyc" id="SENT99287:STM0628-MONOMER"/>
<dbReference type="BRENDA" id="2.3.1.251">
    <property type="organism ID" value="5542"/>
</dbReference>
<dbReference type="Proteomes" id="UP000001014">
    <property type="component" value="Chromosome"/>
</dbReference>
<dbReference type="GO" id="GO:0009279">
    <property type="term" value="C:cell outer membrane"/>
    <property type="evidence" value="ECO:0000314"/>
    <property type="project" value="UniProtKB"/>
</dbReference>
<dbReference type="GO" id="GO:0016409">
    <property type="term" value="F:palmitoyltransferase activity"/>
    <property type="evidence" value="ECO:0000314"/>
    <property type="project" value="UniProtKB"/>
</dbReference>
<dbReference type="GO" id="GO:0009245">
    <property type="term" value="P:lipid A biosynthetic process"/>
    <property type="evidence" value="ECO:0000314"/>
    <property type="project" value="UniProtKB"/>
</dbReference>
<dbReference type="FunFam" id="2.40.160.20:FF:000002">
    <property type="entry name" value="Lipid A palmitoyltransferase PagP"/>
    <property type="match status" value="1"/>
</dbReference>
<dbReference type="Gene3D" id="2.40.160.20">
    <property type="match status" value="1"/>
</dbReference>
<dbReference type="HAMAP" id="MF_00837">
    <property type="entry name" value="PagP_transferase"/>
    <property type="match status" value="1"/>
</dbReference>
<dbReference type="InterPro" id="IPR009746">
    <property type="entry name" value="LipidA_acyl_PagP"/>
</dbReference>
<dbReference type="InterPro" id="IPR011250">
    <property type="entry name" value="OMP/PagP_b-brl"/>
</dbReference>
<dbReference type="NCBIfam" id="NF008271">
    <property type="entry name" value="PRK11045.1"/>
    <property type="match status" value="1"/>
</dbReference>
<dbReference type="Pfam" id="PF07017">
    <property type="entry name" value="PagP"/>
    <property type="match status" value="1"/>
</dbReference>
<dbReference type="SUPFAM" id="SSF56925">
    <property type="entry name" value="OMPA-like"/>
    <property type="match status" value="1"/>
</dbReference>
<keyword id="KW-0012">Acyltransferase</keyword>
<keyword id="KW-0998">Cell outer membrane</keyword>
<keyword id="KW-0472">Membrane</keyword>
<keyword id="KW-1185">Reference proteome</keyword>
<keyword id="KW-0732">Signal</keyword>
<keyword id="KW-0808">Transferase</keyword>
<name>PAGP_SALTY</name>
<sequence>MYVAMIIRKYFLIIALLLMPWLAIPSVSAADKGGFNTFTDNVAETWRQPEHYDLYVPAITWHARFAYDKEKTDRYNERPWGVGFGQSRWDDKGNWHGLYMMAFKDSFNKWEPIGGYGWEKTWRPLEDDNFRLGLGFTAGVTARDNWNYIPIPVLLPLASIGYGPATFQMTYIPGSYNNGNVYFAWMRFQF</sequence>
<gene>
    <name evidence="1 4" type="primary">pagP</name>
    <name type="ordered locus">STM0628</name>
</gene>
<evidence type="ECO:0000255" key="1">
    <source>
        <dbReference type="HAMAP-Rule" id="MF_00837"/>
    </source>
</evidence>
<evidence type="ECO:0000269" key="2">
    <source>
    </source>
</evidence>
<evidence type="ECO:0000269" key="3">
    <source>
    </source>
</evidence>
<evidence type="ECO:0000303" key="4">
    <source>
    </source>
</evidence>
<evidence type="ECO:0000305" key="5"/>
<evidence type="ECO:0000305" key="6">
    <source>
    </source>
</evidence>
<organism>
    <name type="scientific">Salmonella typhimurium (strain LT2 / SGSC1412 / ATCC 700720)</name>
    <dbReference type="NCBI Taxonomy" id="99287"/>
    <lineage>
        <taxon>Bacteria</taxon>
        <taxon>Pseudomonadati</taxon>
        <taxon>Pseudomonadota</taxon>
        <taxon>Gammaproteobacteria</taxon>
        <taxon>Enterobacterales</taxon>
        <taxon>Enterobacteriaceae</taxon>
        <taxon>Salmonella</taxon>
    </lineage>
</organism>
<accession>Q8ZR06</accession>
<accession>Q9ZHL7</accession>
<comment type="function">
    <text evidence="2 3">Transfers a fatty acid residue from the sn-1 position of a phospholipid to the N-linked hydroxyfatty acid chain on the proximal unit of lipid A or its precursors. Required for resistance to cationic antimicrobial peptides (CAMPs). Modifications of lipid A with an acyl chain allow to evade host immune defenses by resisting antimicrobial peptides and attenuating the inflammatory response to infection triggered by lipopolysaccharide through the Toll-like receptor 4 (TLR4) signal transduction pathway.</text>
</comment>
<comment type="catalytic activity">
    <reaction evidence="1 3">
        <text>a lipid A + a 1,2-diacyl-sn-glycero-3-phosphocholine = a hepta-acyl lipid A + a 2-acyl-sn-glycero-3-phosphocholine</text>
        <dbReference type="Rhea" id="RHEA:74275"/>
        <dbReference type="ChEBI" id="CHEBI:57643"/>
        <dbReference type="ChEBI" id="CHEBI:57875"/>
        <dbReference type="ChEBI" id="CHEBI:193141"/>
        <dbReference type="ChEBI" id="CHEBI:193142"/>
        <dbReference type="EC" id="2.3.1.251"/>
    </reaction>
</comment>
<comment type="catalytic activity">
    <reaction evidence="1 2">
        <text>a lipid IVA + a 1,2-diacyl-sn-glycero-3-phosphocholine = a lipid IVB + a 2-acyl-sn-glycero-3-phosphocholine</text>
        <dbReference type="Rhea" id="RHEA:74279"/>
        <dbReference type="ChEBI" id="CHEBI:57643"/>
        <dbReference type="ChEBI" id="CHEBI:57875"/>
        <dbReference type="ChEBI" id="CHEBI:176425"/>
        <dbReference type="ChEBI" id="CHEBI:193143"/>
        <dbReference type="EC" id="2.3.1.251"/>
    </reaction>
</comment>
<comment type="catalytic activity">
    <reaction evidence="1">
        <text>a lipid IIA + a 1,2-diacyl-sn-glycero-3-phosphocholine = a lipid IIB + a 2-acyl-sn-glycero-3-phosphocholine</text>
        <dbReference type="Rhea" id="RHEA:74283"/>
        <dbReference type="ChEBI" id="CHEBI:57643"/>
        <dbReference type="ChEBI" id="CHEBI:57875"/>
        <dbReference type="ChEBI" id="CHEBI:193144"/>
        <dbReference type="ChEBI" id="CHEBI:193145"/>
        <dbReference type="EC" id="2.3.1.251"/>
    </reaction>
</comment>
<comment type="subunit">
    <text evidence="1">Homodimer.</text>
</comment>
<comment type="subcellular location">
    <subcellularLocation>
        <location evidence="1 2">Cell outer membrane</location>
    </subcellularLocation>
</comment>
<comment type="induction">
    <text evidence="6">Regulated by the PhoP/PhoQ two-component regulatory system.</text>
</comment>
<comment type="disruption phenotype">
    <text evidence="3">Disruption of this gene increases outer membrane permeability in response to CAMP.</text>
</comment>
<comment type="similarity">
    <text evidence="1 5">Belongs to the lipid A palmitoyltransferase family.</text>
</comment>
<comment type="sequence caution" evidence="5">
    <conflict type="erroneous initiation">
        <sequence resource="EMBL-CDS" id="AAC67499"/>
    </conflict>
    <text>Truncated N-terminus.</text>
</comment>
<protein>
    <recommendedName>
        <fullName evidence="1 5">Lipid A acyltransferase PagP</fullName>
        <ecNumber evidence="1 2 3">2.3.1.251</ecNumber>
    </recommendedName>
    <alternativeName>
        <fullName>Antimicrobial peptide resistance</fullName>
    </alternativeName>
    <alternativeName>
        <fullName evidence="1">Lipid A acylation protein</fullName>
    </alternativeName>
</protein>
<feature type="signal peptide" evidence="1">
    <location>
        <begin position="1"/>
        <end position="29"/>
    </location>
</feature>
<feature type="chain" id="PRO_0000414473" description="Lipid A acyltransferase PagP">
    <location>
        <begin position="30"/>
        <end position="190"/>
    </location>
</feature>
<feature type="active site" evidence="1">
    <location>
        <position position="62"/>
    </location>
</feature>
<feature type="active site" evidence="1">
    <location>
        <position position="105"/>
    </location>
</feature>
<feature type="active site" evidence="1">
    <location>
        <position position="106"/>
    </location>
</feature>
<feature type="site" description="Role in lipopolysaccharide recognition" evidence="1">
    <location>
        <position position="71"/>
    </location>
</feature>
<feature type="site" description="Role in the phospholipid gating" evidence="1">
    <location>
        <position position="176"/>
    </location>
</feature>